<accession>P0C9Z2</accession>
<comment type="function">
    <text evidence="2">Modifies the subcellular distribution of heterogeneous nuclear ribonucleoprotein K (HNRNPK) and may contribute to modulate HNRNPK functions related to processing and export of mRNAs during ASFV infection (By similarity). Necessary for virus internalization (By similarity).</text>
</comment>
<comment type="subunit">
    <text evidence="2">Oligomer. Interacts with host HNRNPK.</text>
</comment>
<comment type="subcellular location">
    <subcellularLocation>
        <location evidence="2">Host cytoplasm</location>
    </subcellularLocation>
    <subcellularLocation>
        <location evidence="2">Host nucleus</location>
    </subcellularLocation>
    <subcellularLocation>
        <location evidence="2">Virion</location>
    </subcellularLocation>
</comment>
<comment type="induction">
    <text evidence="3">Expressed in the early phase of the viral replicative cycle.</text>
</comment>
<comment type="PTM">
    <text evidence="1">Phosphorylated on serine residues in the 115 N-terminal amino acids.</text>
</comment>
<comment type="similarity">
    <text evidence="3">Belongs to the asfivirus phosphoprotein p30 family.</text>
</comment>
<protein>
    <recommendedName>
        <fullName>Phosphoprotein p30</fullName>
        <shortName>p30</shortName>
    </recommendedName>
    <alternativeName>
        <fullName>Phosphoprotein p32</fullName>
        <shortName>p32</shortName>
    </alternativeName>
</protein>
<gene>
    <name type="ordered locus">Mal-101</name>
</gene>
<keyword id="KW-0244">Early protein</keyword>
<keyword id="KW-1035">Host cytoplasm</keyword>
<keyword id="KW-1048">Host nucleus</keyword>
<keyword id="KW-0945">Host-virus interaction</keyword>
<keyword id="KW-0597">Phosphoprotein</keyword>
<keyword id="KW-0946">Virion</keyword>
<sequence>MDFILNISVKMEVIFKTDLRSSSQVVFHAGSLYTWFSIEIINSGRIVTTAIKTLLNTVKYDIVRSARVYAGQGYTEQQAQEEWNMILHVLFEEETESSASLESIHEKNDHEKNDHEIDECTSSFETLFEQEPSSTETPKNAKLYALAQKTVQHIEQYGKAPDFNKIIRAHNFIQTIHGTPLKEEEKEEVRLMVIKLLKKK</sequence>
<proteinExistence type="inferred from homology"/>
<organism>
    <name type="scientific">African swine fever virus (isolate Tick/Malawi/Lil 20-1/1983)</name>
    <name type="common">ASFV</name>
    <dbReference type="NCBI Taxonomy" id="10500"/>
    <lineage>
        <taxon>Viruses</taxon>
        <taxon>Varidnaviria</taxon>
        <taxon>Bamfordvirae</taxon>
        <taxon>Nucleocytoviricota</taxon>
        <taxon>Pokkesviricetes</taxon>
        <taxon>Asfuvirales</taxon>
        <taxon>Asfarviridae</taxon>
        <taxon>Asfivirus</taxon>
        <taxon>African swine fever virus</taxon>
    </lineage>
</organism>
<feature type="chain" id="PRO_0000373407" description="Phosphoprotein p30">
    <location>
        <begin position="1"/>
        <end position="200"/>
    </location>
</feature>
<name>P30_ASFM2</name>
<dbReference type="EMBL" id="AY261361">
    <property type="status" value="NOT_ANNOTATED_CDS"/>
    <property type="molecule type" value="Genomic_DNA"/>
</dbReference>
<dbReference type="SMR" id="P0C9Z2"/>
<dbReference type="Proteomes" id="UP000000860">
    <property type="component" value="Segment"/>
</dbReference>
<dbReference type="GO" id="GO:0030430">
    <property type="term" value="C:host cell cytoplasm"/>
    <property type="evidence" value="ECO:0007669"/>
    <property type="project" value="UniProtKB-SubCell"/>
</dbReference>
<dbReference type="GO" id="GO:0042025">
    <property type="term" value="C:host cell nucleus"/>
    <property type="evidence" value="ECO:0007669"/>
    <property type="project" value="UniProtKB-SubCell"/>
</dbReference>
<dbReference type="GO" id="GO:0044423">
    <property type="term" value="C:virion component"/>
    <property type="evidence" value="ECO:0007669"/>
    <property type="project" value="UniProtKB-KW"/>
</dbReference>
<reference key="1">
    <citation type="submission" date="2003-03" db="EMBL/GenBank/DDBJ databases">
        <title>African swine fever virus genomes.</title>
        <authorList>
            <person name="Kutish G.F."/>
            <person name="Rock D.L."/>
        </authorList>
    </citation>
    <scope>NUCLEOTIDE SEQUENCE [LARGE SCALE GENOMIC DNA]</scope>
</reference>
<evidence type="ECO:0000250" key="1"/>
<evidence type="ECO:0000250" key="2">
    <source>
        <dbReference type="UniProtKB" id="P34204"/>
    </source>
</evidence>
<evidence type="ECO:0000305" key="3"/>
<organismHost>
    <name type="scientific">Ornithodoros</name>
    <name type="common">relapsing fever ticks</name>
    <dbReference type="NCBI Taxonomy" id="6937"/>
</organismHost>
<organismHost>
    <name type="scientific">Phacochoerus aethiopicus</name>
    <name type="common">Warthog</name>
    <dbReference type="NCBI Taxonomy" id="85517"/>
</organismHost>
<organismHost>
    <name type="scientific">Phacochoerus africanus</name>
    <name type="common">Warthog</name>
    <dbReference type="NCBI Taxonomy" id="41426"/>
</organismHost>
<organismHost>
    <name type="scientific">Potamochoerus larvatus</name>
    <name type="common">Bushpig</name>
    <dbReference type="NCBI Taxonomy" id="273792"/>
</organismHost>
<organismHost>
    <name type="scientific">Sus scrofa</name>
    <name type="common">Pig</name>
    <dbReference type="NCBI Taxonomy" id="9823"/>
</organismHost>